<organism>
    <name type="scientific">Yersinia pestis bv. Antiqua (strain Nepal516)</name>
    <dbReference type="NCBI Taxonomy" id="377628"/>
    <lineage>
        <taxon>Bacteria</taxon>
        <taxon>Pseudomonadati</taxon>
        <taxon>Pseudomonadota</taxon>
        <taxon>Gammaproteobacteria</taxon>
        <taxon>Enterobacterales</taxon>
        <taxon>Yersiniaceae</taxon>
        <taxon>Yersinia</taxon>
    </lineage>
</organism>
<name>AROL_YERPN</name>
<keyword id="KW-0028">Amino-acid biosynthesis</keyword>
<keyword id="KW-0057">Aromatic amino acid biosynthesis</keyword>
<keyword id="KW-0067">ATP-binding</keyword>
<keyword id="KW-0963">Cytoplasm</keyword>
<keyword id="KW-0418">Kinase</keyword>
<keyword id="KW-0460">Magnesium</keyword>
<keyword id="KW-0479">Metal-binding</keyword>
<keyword id="KW-0547">Nucleotide-binding</keyword>
<keyword id="KW-0808">Transferase</keyword>
<evidence type="ECO:0000255" key="1">
    <source>
        <dbReference type="HAMAP-Rule" id="MF_01269"/>
    </source>
</evidence>
<gene>
    <name evidence="1" type="primary">aroL</name>
    <name type="ordered locus">YPN_0878</name>
    <name type="ORF">YP516_0950</name>
</gene>
<sequence>MTQTIFMVGARGAGKTTIGKALAQALGYRFVDTDLFMQQTSQMTVAEVVESEGWDGFRLRESMALQAVTAPKTVVATGGGAVLSSENRAFMRDHGRVIYLRASAAVLAKRLAEDPEEAQRPSLTGKPIVEEILDVLASREALYQDVAHHVLDGTQTPSLVVEQILQMLTGEMVK</sequence>
<protein>
    <recommendedName>
        <fullName evidence="1">Shikimate kinase 2</fullName>
        <shortName evidence="1">SK 2</shortName>
        <ecNumber evidence="1">2.7.1.71</ecNumber>
    </recommendedName>
</protein>
<comment type="function">
    <text evidence="1">Catalyzes the specific phosphorylation of the 3-hydroxyl group of shikimic acid using ATP as a cosubstrate.</text>
</comment>
<comment type="catalytic activity">
    <reaction evidence="1">
        <text>shikimate + ATP = 3-phosphoshikimate + ADP + H(+)</text>
        <dbReference type="Rhea" id="RHEA:13121"/>
        <dbReference type="ChEBI" id="CHEBI:15378"/>
        <dbReference type="ChEBI" id="CHEBI:30616"/>
        <dbReference type="ChEBI" id="CHEBI:36208"/>
        <dbReference type="ChEBI" id="CHEBI:145989"/>
        <dbReference type="ChEBI" id="CHEBI:456216"/>
        <dbReference type="EC" id="2.7.1.71"/>
    </reaction>
</comment>
<comment type="cofactor">
    <cofactor evidence="1">
        <name>Mg(2+)</name>
        <dbReference type="ChEBI" id="CHEBI:18420"/>
    </cofactor>
    <text evidence="1">Binds 1 Mg(2+) ion per subunit.</text>
</comment>
<comment type="pathway">
    <text evidence="1">Metabolic intermediate biosynthesis; chorismate biosynthesis; chorismate from D-erythrose 4-phosphate and phosphoenolpyruvate: step 5/7.</text>
</comment>
<comment type="subunit">
    <text evidence="1">Monomer.</text>
</comment>
<comment type="subcellular location">
    <subcellularLocation>
        <location evidence="1">Cytoplasm</location>
    </subcellularLocation>
</comment>
<comment type="domain">
    <text evidence="1">The LID domain closes over the active site upon ATP binding.</text>
</comment>
<comment type="similarity">
    <text evidence="1">Belongs to the shikimate kinase family. AroL subfamily.</text>
</comment>
<dbReference type="EC" id="2.7.1.71" evidence="1"/>
<dbReference type="EMBL" id="CP000305">
    <property type="protein sequence ID" value="ABG17210.1"/>
    <property type="molecule type" value="Genomic_DNA"/>
</dbReference>
<dbReference type="EMBL" id="ACNQ01000008">
    <property type="protein sequence ID" value="EEO77291.1"/>
    <property type="molecule type" value="Genomic_DNA"/>
</dbReference>
<dbReference type="RefSeq" id="WP_002208693.1">
    <property type="nucleotide sequence ID" value="NZ_ACNQ01000008.1"/>
</dbReference>
<dbReference type="SMR" id="Q1CLC0"/>
<dbReference type="GeneID" id="57975502"/>
<dbReference type="KEGG" id="ypn:YPN_0878"/>
<dbReference type="HOGENOM" id="CLU_057607_4_3_6"/>
<dbReference type="UniPathway" id="UPA00053">
    <property type="reaction ID" value="UER00088"/>
</dbReference>
<dbReference type="Proteomes" id="UP000008936">
    <property type="component" value="Chromosome"/>
</dbReference>
<dbReference type="GO" id="GO:0005829">
    <property type="term" value="C:cytosol"/>
    <property type="evidence" value="ECO:0007669"/>
    <property type="project" value="TreeGrafter"/>
</dbReference>
<dbReference type="GO" id="GO:0005524">
    <property type="term" value="F:ATP binding"/>
    <property type="evidence" value="ECO:0007669"/>
    <property type="project" value="UniProtKB-UniRule"/>
</dbReference>
<dbReference type="GO" id="GO:0000287">
    <property type="term" value="F:magnesium ion binding"/>
    <property type="evidence" value="ECO:0007669"/>
    <property type="project" value="UniProtKB-UniRule"/>
</dbReference>
<dbReference type="GO" id="GO:0004765">
    <property type="term" value="F:shikimate kinase activity"/>
    <property type="evidence" value="ECO:0007669"/>
    <property type="project" value="UniProtKB-UniRule"/>
</dbReference>
<dbReference type="GO" id="GO:0008652">
    <property type="term" value="P:amino acid biosynthetic process"/>
    <property type="evidence" value="ECO:0007669"/>
    <property type="project" value="UniProtKB-KW"/>
</dbReference>
<dbReference type="GO" id="GO:0009073">
    <property type="term" value="P:aromatic amino acid family biosynthetic process"/>
    <property type="evidence" value="ECO:0007669"/>
    <property type="project" value="UniProtKB-KW"/>
</dbReference>
<dbReference type="GO" id="GO:0009423">
    <property type="term" value="P:chorismate biosynthetic process"/>
    <property type="evidence" value="ECO:0007669"/>
    <property type="project" value="UniProtKB-UniRule"/>
</dbReference>
<dbReference type="CDD" id="cd00464">
    <property type="entry name" value="SK"/>
    <property type="match status" value="1"/>
</dbReference>
<dbReference type="Gene3D" id="3.40.50.300">
    <property type="entry name" value="P-loop containing nucleotide triphosphate hydrolases"/>
    <property type="match status" value="1"/>
</dbReference>
<dbReference type="HAMAP" id="MF_00109">
    <property type="entry name" value="Shikimate_kinase"/>
    <property type="match status" value="1"/>
</dbReference>
<dbReference type="HAMAP" id="MF_01269">
    <property type="entry name" value="Shikimate_kinase_2"/>
    <property type="match status" value="1"/>
</dbReference>
<dbReference type="InterPro" id="IPR027417">
    <property type="entry name" value="P-loop_NTPase"/>
</dbReference>
<dbReference type="InterPro" id="IPR031322">
    <property type="entry name" value="Shikimate/glucono_kinase"/>
</dbReference>
<dbReference type="InterPro" id="IPR000623">
    <property type="entry name" value="Shikimate_kinase/TSH1"/>
</dbReference>
<dbReference type="InterPro" id="IPR027544">
    <property type="entry name" value="Shikimate_kinase_2"/>
</dbReference>
<dbReference type="InterPro" id="IPR023000">
    <property type="entry name" value="Shikimate_kinase_CS"/>
</dbReference>
<dbReference type="NCBIfam" id="NF002988">
    <property type="entry name" value="PRK03731.1"/>
    <property type="match status" value="1"/>
</dbReference>
<dbReference type="PANTHER" id="PTHR21087">
    <property type="entry name" value="SHIKIMATE KINASE"/>
    <property type="match status" value="1"/>
</dbReference>
<dbReference type="PANTHER" id="PTHR21087:SF21">
    <property type="entry name" value="SHIKIMATE KINASE 2"/>
    <property type="match status" value="1"/>
</dbReference>
<dbReference type="Pfam" id="PF01202">
    <property type="entry name" value="SKI"/>
    <property type="match status" value="1"/>
</dbReference>
<dbReference type="PRINTS" id="PR01100">
    <property type="entry name" value="SHIKIMTKNASE"/>
</dbReference>
<dbReference type="SUPFAM" id="SSF52540">
    <property type="entry name" value="P-loop containing nucleoside triphosphate hydrolases"/>
    <property type="match status" value="1"/>
</dbReference>
<dbReference type="PROSITE" id="PS01128">
    <property type="entry name" value="SHIKIMATE_KINASE"/>
    <property type="match status" value="1"/>
</dbReference>
<reference key="1">
    <citation type="journal article" date="2006" name="J. Bacteriol.">
        <title>Complete genome sequence of Yersinia pestis strains Antiqua and Nepal516: evidence of gene reduction in an emerging pathogen.</title>
        <authorList>
            <person name="Chain P.S.G."/>
            <person name="Hu P."/>
            <person name="Malfatti S.A."/>
            <person name="Radnedge L."/>
            <person name="Larimer F."/>
            <person name="Vergez L.M."/>
            <person name="Worsham P."/>
            <person name="Chu M.C."/>
            <person name="Andersen G.L."/>
        </authorList>
    </citation>
    <scope>NUCLEOTIDE SEQUENCE [LARGE SCALE GENOMIC DNA]</scope>
    <source>
        <strain>Nepal516</strain>
    </source>
</reference>
<reference key="2">
    <citation type="submission" date="2009-04" db="EMBL/GenBank/DDBJ databases">
        <title>Yersinia pestis Nepal516A whole genome shotgun sequencing project.</title>
        <authorList>
            <person name="Plunkett G. III"/>
            <person name="Anderson B.D."/>
            <person name="Baumler D.J."/>
            <person name="Burland V."/>
            <person name="Cabot E.L."/>
            <person name="Glasner J.D."/>
            <person name="Mau B."/>
            <person name="Neeno-Eckwall E."/>
            <person name="Perna N.T."/>
            <person name="Munk A.C."/>
            <person name="Tapia R."/>
            <person name="Green L.D."/>
            <person name="Rogers Y.C."/>
            <person name="Detter J.C."/>
            <person name="Bruce D.C."/>
            <person name="Brettin T.S."/>
        </authorList>
    </citation>
    <scope>NUCLEOTIDE SEQUENCE [LARGE SCALE GENOMIC DNA]</scope>
    <source>
        <strain>Nepal516</strain>
    </source>
</reference>
<feature type="chain" id="PRO_1000067339" description="Shikimate kinase 2">
    <location>
        <begin position="1"/>
        <end position="174"/>
    </location>
</feature>
<feature type="region of interest" description="LID domain">
    <location>
        <begin position="112"/>
        <end position="126"/>
    </location>
</feature>
<feature type="binding site" evidence="1">
    <location>
        <begin position="12"/>
        <end position="17"/>
    </location>
    <ligand>
        <name>ATP</name>
        <dbReference type="ChEBI" id="CHEBI:30616"/>
    </ligand>
</feature>
<feature type="binding site" evidence="1">
    <location>
        <position position="16"/>
    </location>
    <ligand>
        <name>Mg(2+)</name>
        <dbReference type="ChEBI" id="CHEBI:18420"/>
    </ligand>
</feature>
<feature type="binding site" evidence="1">
    <location>
        <position position="32"/>
    </location>
    <ligand>
        <name>Mg(2+)</name>
        <dbReference type="ChEBI" id="CHEBI:18420"/>
    </ligand>
</feature>
<feature type="binding site" evidence="1">
    <location>
        <position position="34"/>
    </location>
    <ligand>
        <name>substrate</name>
    </ligand>
</feature>
<feature type="binding site" evidence="1">
    <location>
        <position position="58"/>
    </location>
    <ligand>
        <name>substrate</name>
    </ligand>
</feature>
<feature type="binding site" evidence="1">
    <location>
        <position position="79"/>
    </location>
    <ligand>
        <name>substrate</name>
    </ligand>
</feature>
<feature type="binding site" evidence="1">
    <location>
        <position position="120"/>
    </location>
    <ligand>
        <name>ATP</name>
        <dbReference type="ChEBI" id="CHEBI:30616"/>
    </ligand>
</feature>
<feature type="binding site" evidence="1">
    <location>
        <position position="139"/>
    </location>
    <ligand>
        <name>substrate</name>
    </ligand>
</feature>
<feature type="binding site" evidence="1">
    <location>
        <position position="155"/>
    </location>
    <ligand>
        <name>ATP</name>
        <dbReference type="ChEBI" id="CHEBI:30616"/>
    </ligand>
</feature>
<proteinExistence type="inferred from homology"/>
<accession>Q1CLC0</accession>
<accession>C4GQF0</accession>